<proteinExistence type="evidence at transcript level"/>
<keyword id="KW-0067">ATP-binding</keyword>
<keyword id="KW-0963">Cytoplasm</keyword>
<keyword id="KW-0968">Cytoplasmic vesicle</keyword>
<keyword id="KW-0375">Hydrogen ion transport</keyword>
<keyword id="KW-0406">Ion transport</keyword>
<keyword id="KW-0458">Lysosome</keyword>
<keyword id="KW-0472">Membrane</keyword>
<keyword id="KW-0547">Nucleotide-binding</keyword>
<keyword id="KW-0597">Phosphoprotein</keyword>
<keyword id="KW-1185">Reference proteome</keyword>
<keyword id="KW-1278">Translocase</keyword>
<keyword id="KW-0813">Transport</keyword>
<reference key="1">
    <citation type="submission" date="2004-11" db="EMBL/GenBank/DDBJ databases">
        <authorList>
            <consortium name="The German cDNA consortium"/>
        </authorList>
    </citation>
    <scope>NUCLEOTIDE SEQUENCE [LARGE SCALE MRNA]</scope>
    <source>
        <tissue>Brain cortex</tissue>
        <tissue>Kidney</tissue>
    </source>
</reference>
<name>VATA_PONAB</name>
<dbReference type="EC" id="7.1.2.2" evidence="3"/>
<dbReference type="EMBL" id="CR859606">
    <property type="protein sequence ID" value="CAH91769.1"/>
    <property type="molecule type" value="mRNA"/>
</dbReference>
<dbReference type="EMBL" id="CR860887">
    <property type="protein sequence ID" value="CAH92994.1"/>
    <property type="molecule type" value="mRNA"/>
</dbReference>
<dbReference type="RefSeq" id="NP_001126025.1">
    <property type="nucleotide sequence ID" value="NM_001132553.1"/>
</dbReference>
<dbReference type="RefSeq" id="XP_054406300.1">
    <property type="nucleotide sequence ID" value="XM_054550325.2"/>
</dbReference>
<dbReference type="SMR" id="Q5R5H2"/>
<dbReference type="FunCoup" id="Q5R5H2">
    <property type="interactions" value="3082"/>
</dbReference>
<dbReference type="STRING" id="9601.ENSPPYP00000015134"/>
<dbReference type="Ensembl" id="ENSPPYT00000015739.3">
    <property type="protein sequence ID" value="ENSPPYP00000015134.3"/>
    <property type="gene ID" value="ENSPPYG00000013535.3"/>
</dbReference>
<dbReference type="GeneID" id="100172972"/>
<dbReference type="KEGG" id="pon:100172972"/>
<dbReference type="CTD" id="523"/>
<dbReference type="eggNOG" id="KOG1352">
    <property type="taxonomic scope" value="Eukaryota"/>
</dbReference>
<dbReference type="GeneTree" id="ENSGT00550000074787"/>
<dbReference type="InParanoid" id="Q5R5H2"/>
<dbReference type="OMA" id="RIVKTFW"/>
<dbReference type="OrthoDB" id="1676488at2759"/>
<dbReference type="Proteomes" id="UP000001595">
    <property type="component" value="Chromosome 3"/>
</dbReference>
<dbReference type="GO" id="GO:0016324">
    <property type="term" value="C:apical plasma membrane"/>
    <property type="evidence" value="ECO:0007669"/>
    <property type="project" value="Ensembl"/>
</dbReference>
<dbReference type="GO" id="GO:0030665">
    <property type="term" value="C:clathrin-coated vesicle membrane"/>
    <property type="evidence" value="ECO:0007669"/>
    <property type="project" value="UniProtKB-SubCell"/>
</dbReference>
<dbReference type="GO" id="GO:0005737">
    <property type="term" value="C:cytoplasm"/>
    <property type="evidence" value="ECO:0000250"/>
    <property type="project" value="UniProtKB"/>
</dbReference>
<dbReference type="GO" id="GO:0005829">
    <property type="term" value="C:cytosol"/>
    <property type="evidence" value="ECO:0000250"/>
    <property type="project" value="UniProtKB"/>
</dbReference>
<dbReference type="GO" id="GO:0005765">
    <property type="term" value="C:lysosomal membrane"/>
    <property type="evidence" value="ECO:0007669"/>
    <property type="project" value="TreeGrafter"/>
</dbReference>
<dbReference type="GO" id="GO:0005902">
    <property type="term" value="C:microvillus"/>
    <property type="evidence" value="ECO:0007669"/>
    <property type="project" value="Ensembl"/>
</dbReference>
<dbReference type="GO" id="GO:0005654">
    <property type="term" value="C:nucleoplasm"/>
    <property type="evidence" value="ECO:0007669"/>
    <property type="project" value="Ensembl"/>
</dbReference>
<dbReference type="GO" id="GO:0005886">
    <property type="term" value="C:plasma membrane"/>
    <property type="evidence" value="ECO:0000250"/>
    <property type="project" value="UniProtKB"/>
</dbReference>
<dbReference type="GO" id="GO:0098793">
    <property type="term" value="C:presynapse"/>
    <property type="evidence" value="ECO:0007669"/>
    <property type="project" value="GOC"/>
</dbReference>
<dbReference type="GO" id="GO:0030141">
    <property type="term" value="C:secretory granule"/>
    <property type="evidence" value="ECO:0007669"/>
    <property type="project" value="Ensembl"/>
</dbReference>
<dbReference type="GO" id="GO:0030133">
    <property type="term" value="C:transport vesicle"/>
    <property type="evidence" value="ECO:0007669"/>
    <property type="project" value="UniProtKB-SubCell"/>
</dbReference>
<dbReference type="GO" id="GO:0000221">
    <property type="term" value="C:vacuolar proton-transporting V-type ATPase, V1 domain"/>
    <property type="evidence" value="ECO:0000250"/>
    <property type="project" value="UniProtKB"/>
</dbReference>
<dbReference type="GO" id="GO:0005524">
    <property type="term" value="F:ATP binding"/>
    <property type="evidence" value="ECO:0007669"/>
    <property type="project" value="UniProtKB-KW"/>
</dbReference>
<dbReference type="GO" id="GO:0016887">
    <property type="term" value="F:ATP hydrolysis activity"/>
    <property type="evidence" value="ECO:0007669"/>
    <property type="project" value="InterPro"/>
</dbReference>
<dbReference type="GO" id="GO:0046961">
    <property type="term" value="F:proton-transporting ATPase activity, rotational mechanism"/>
    <property type="evidence" value="ECO:0000250"/>
    <property type="project" value="UniProtKB"/>
</dbReference>
<dbReference type="GO" id="GO:0046034">
    <property type="term" value="P:ATP metabolic process"/>
    <property type="evidence" value="ECO:0007669"/>
    <property type="project" value="InterPro"/>
</dbReference>
<dbReference type="GO" id="GO:0036295">
    <property type="term" value="P:cellular response to increased oxygen levels"/>
    <property type="evidence" value="ECO:0000250"/>
    <property type="project" value="UniProtKB"/>
</dbReference>
<dbReference type="GO" id="GO:0006879">
    <property type="term" value="P:intracellular iron ion homeostasis"/>
    <property type="evidence" value="ECO:0000250"/>
    <property type="project" value="UniProtKB"/>
</dbReference>
<dbReference type="GO" id="GO:0097401">
    <property type="term" value="P:synaptic vesicle lumen acidification"/>
    <property type="evidence" value="ECO:0007669"/>
    <property type="project" value="Ensembl"/>
</dbReference>
<dbReference type="CDD" id="cd18111">
    <property type="entry name" value="ATP-synt_V_A-type_alpha_C"/>
    <property type="match status" value="1"/>
</dbReference>
<dbReference type="CDD" id="cd18119">
    <property type="entry name" value="ATP-synt_V_A-type_alpha_N"/>
    <property type="match status" value="1"/>
</dbReference>
<dbReference type="CDD" id="cd01134">
    <property type="entry name" value="V_A-ATPase_A"/>
    <property type="match status" value="1"/>
</dbReference>
<dbReference type="FunFam" id="1.10.1140.10:FF:000002">
    <property type="entry name" value="V-type proton ATPase catalytic subunit A"/>
    <property type="match status" value="1"/>
</dbReference>
<dbReference type="FunFam" id="2.40.30.20:FF:000002">
    <property type="entry name" value="V-type proton ATPase catalytic subunit A"/>
    <property type="match status" value="1"/>
</dbReference>
<dbReference type="FunFam" id="2.40.50.100:FF:000008">
    <property type="entry name" value="V-type proton ATPase catalytic subunit A"/>
    <property type="match status" value="1"/>
</dbReference>
<dbReference type="FunFam" id="3.40.50.300:FF:000052">
    <property type="entry name" value="V-type proton ATPase catalytic subunit A"/>
    <property type="match status" value="1"/>
</dbReference>
<dbReference type="Gene3D" id="2.40.30.20">
    <property type="match status" value="1"/>
</dbReference>
<dbReference type="Gene3D" id="2.40.50.100">
    <property type="match status" value="1"/>
</dbReference>
<dbReference type="Gene3D" id="1.10.1140.10">
    <property type="entry name" value="Bovine Mitochondrial F1-atpase, Atp Synthase Beta Chain, Chain D, domain 3"/>
    <property type="match status" value="1"/>
</dbReference>
<dbReference type="Gene3D" id="3.40.50.300">
    <property type="entry name" value="P-loop containing nucleotide triphosphate hydrolases"/>
    <property type="match status" value="1"/>
</dbReference>
<dbReference type="HAMAP" id="MF_00309">
    <property type="entry name" value="ATP_synth_A_arch"/>
    <property type="match status" value="1"/>
</dbReference>
<dbReference type="InterPro" id="IPR055190">
    <property type="entry name" value="ATP-synt_VA_C"/>
</dbReference>
<dbReference type="InterPro" id="IPR031686">
    <property type="entry name" value="ATP-synth_a_Xtn"/>
</dbReference>
<dbReference type="InterPro" id="IPR023366">
    <property type="entry name" value="ATP_synth_asu-like_sf"/>
</dbReference>
<dbReference type="InterPro" id="IPR020003">
    <property type="entry name" value="ATPase_a/bsu_AS"/>
</dbReference>
<dbReference type="InterPro" id="IPR004100">
    <property type="entry name" value="ATPase_F1/V1/A1_a/bsu_N"/>
</dbReference>
<dbReference type="InterPro" id="IPR036121">
    <property type="entry name" value="ATPase_F1/V1/A1_a/bsu_N_sf"/>
</dbReference>
<dbReference type="InterPro" id="IPR000194">
    <property type="entry name" value="ATPase_F1/V1/A1_a/bsu_nucl-bd"/>
</dbReference>
<dbReference type="InterPro" id="IPR024034">
    <property type="entry name" value="ATPase_F1/V1_b/a_C"/>
</dbReference>
<dbReference type="InterPro" id="IPR005725">
    <property type="entry name" value="ATPase_V1-cplx_asu"/>
</dbReference>
<dbReference type="InterPro" id="IPR027417">
    <property type="entry name" value="P-loop_NTPase"/>
</dbReference>
<dbReference type="InterPro" id="IPR022878">
    <property type="entry name" value="V-ATPase_asu"/>
</dbReference>
<dbReference type="NCBIfam" id="NF003220">
    <property type="entry name" value="PRK04192.1"/>
    <property type="match status" value="1"/>
</dbReference>
<dbReference type="NCBIfam" id="TIGR01042">
    <property type="entry name" value="V-ATPase_V1_A"/>
    <property type="match status" value="1"/>
</dbReference>
<dbReference type="PANTHER" id="PTHR43607">
    <property type="entry name" value="V-TYPE PROTON ATPASE CATALYTIC SUBUNIT A"/>
    <property type="match status" value="1"/>
</dbReference>
<dbReference type="PANTHER" id="PTHR43607:SF9">
    <property type="entry name" value="V-TYPE PROTON ATPASE CATALYTIC SUBUNIT A"/>
    <property type="match status" value="1"/>
</dbReference>
<dbReference type="Pfam" id="PF00006">
    <property type="entry name" value="ATP-synt_ab"/>
    <property type="match status" value="1"/>
</dbReference>
<dbReference type="Pfam" id="PF02874">
    <property type="entry name" value="ATP-synt_ab_N"/>
    <property type="match status" value="1"/>
</dbReference>
<dbReference type="Pfam" id="PF16886">
    <property type="entry name" value="ATP-synt_ab_Xtn"/>
    <property type="match status" value="1"/>
</dbReference>
<dbReference type="Pfam" id="PF22919">
    <property type="entry name" value="ATP-synt_VA_C"/>
    <property type="match status" value="1"/>
</dbReference>
<dbReference type="SUPFAM" id="SSF47917">
    <property type="entry name" value="C-terminal domain of alpha and beta subunits of F1 ATP synthase"/>
    <property type="match status" value="1"/>
</dbReference>
<dbReference type="SUPFAM" id="SSF50615">
    <property type="entry name" value="N-terminal domain of alpha and beta subunits of F1 ATP synthase"/>
    <property type="match status" value="1"/>
</dbReference>
<dbReference type="SUPFAM" id="SSF52540">
    <property type="entry name" value="P-loop containing nucleoside triphosphate hydrolases"/>
    <property type="match status" value="1"/>
</dbReference>
<dbReference type="PROSITE" id="PS00152">
    <property type="entry name" value="ATPASE_ALPHA_BETA"/>
    <property type="match status" value="1"/>
</dbReference>
<evidence type="ECO:0000250" key="1">
    <source>
        <dbReference type="UniProtKB" id="P31404"/>
    </source>
</evidence>
<evidence type="ECO:0000250" key="2">
    <source>
        <dbReference type="UniProtKB" id="P38606"/>
    </source>
</evidence>
<evidence type="ECO:0000250" key="3">
    <source>
        <dbReference type="UniProtKB" id="P50516"/>
    </source>
</evidence>
<evidence type="ECO:0000255" key="4"/>
<evidence type="ECO:0000305" key="5"/>
<accession>Q5R5H2</accession>
<comment type="function">
    <text evidence="2">Catalytic subunit of the V1 complex of vacuolar(H+)-ATPase (V-ATPase), a multisubunit enzyme composed of a peripheral complex (V1) that hydrolyzes ATP and a membrane integral complex (V0) that translocates protons (By similarity). V-ATPase is responsible for acidifying and maintaining the pH of intracellular compartments and in some cell types, is targeted to the plasma membrane, where it is responsible for acidifying the extracellular environment (By similarity). In aerobic conditions, involved in intracellular iron homeostasis, thus triggering the activity of Fe(2+) prolyl hydroxylase (PHD) enzymes, and leading to HIF1A hydroxylation and subsequent proteasomal degradation (By similarity). May play a role in neurite development and synaptic connectivity (By similarity).</text>
</comment>
<comment type="catalytic activity">
    <reaction evidence="3">
        <text>ATP + H2O + 4 H(+)(in) = ADP + phosphate + 5 H(+)(out)</text>
        <dbReference type="Rhea" id="RHEA:57720"/>
        <dbReference type="ChEBI" id="CHEBI:15377"/>
        <dbReference type="ChEBI" id="CHEBI:15378"/>
        <dbReference type="ChEBI" id="CHEBI:30616"/>
        <dbReference type="ChEBI" id="CHEBI:43474"/>
        <dbReference type="ChEBI" id="CHEBI:456216"/>
        <dbReference type="EC" id="7.1.2.2"/>
    </reaction>
</comment>
<comment type="activity regulation">
    <text evidence="1">ATP hydrolysis occurs at the interface between the nucleotide-binding domains of subunits A and B (By similarity). ATP hydrolysis triggers a conformational change in the subunits D and F, which induces a shift of subunit d (By similarity). The c-ring is subsequently rotated and results in a continuous proton translocation across the membrane (By similarity).</text>
</comment>
<comment type="subunit">
    <text evidence="2 3">V-ATPase is a heteromultimeric enzyme made up of two complexes: the ATP-hydrolytic V1 complex and the proton translocation V0 complex (By similarity). The V1 complex consists of three catalytic AB heterodimers that form a heterohexamer, three peripheral stalks each consisting of EG heterodimers, one central rotor including subunits D and F, and the regulatory subunits C and H (By similarity). The proton translocation complex V0 consists of the proton transport subunit a, a ring of proteolipid subunits c9c'', rotary subunit d, subunits e and f, and the accessory subunits ATP6AP1/Ac45 and ATP6AP2/PRR (By similarity). Interacts with the V0 complex V-ATPase subunit a4 ATP6V0A4 (By similarity). Interacts with WFS1 (By similarity). Interacts with alpha-crystallin B chain/CRYAB and with MTOR, forming a ternary complex (By similarity).</text>
</comment>
<comment type="subcellular location">
    <subcellularLocation>
        <location evidence="2">Cytoplasm</location>
    </subcellularLocation>
    <subcellularLocation>
        <location evidence="3">Cytoplasm</location>
        <location evidence="3">Cytosol</location>
    </subcellularLocation>
    <subcellularLocation>
        <location evidence="2">Cytoplasmic vesicle</location>
        <location evidence="2">Secretory vesicle</location>
    </subcellularLocation>
    <subcellularLocation>
        <location evidence="1">Cytoplasmic vesicle</location>
        <location evidence="1">Clathrin-coated vesicle membrane</location>
        <topology evidence="5">Peripheral membrane protein</topology>
    </subcellularLocation>
    <subcellularLocation>
        <location evidence="3">Lysosome</location>
    </subcellularLocation>
    <text evidence="2">Co-localizes with WFS1 in the secretory granules in neuroblastoma cell lines.</text>
</comment>
<comment type="PTM">
    <text evidence="3">Phosphorylation at Ser-384 by AMPK down-regulates its enzyme activity.</text>
</comment>
<comment type="similarity">
    <text evidence="5">Belongs to the ATPase alpha/beta chains family.</text>
</comment>
<sequence length="617" mass="68276">MDFSKLPKILDEDKESTFGYVHGVSGPVVTACDMAGAAMYELVRVGHSELVGEIIRLEGDMATIQVYEETSGVSVGDPVLRTGKPLSVELGPGIMGAIFDGIQRPLSDISSQTQSIYIPRGVNVSALSRDIKWDFTPCKNLRVGSHITGGDIYGIVSENSLIKHKIMLPPRNRGTVTYIAPPGNYDTSDVVLELEFEGVKEKFTMVQVWPVRQVRPVTEKLPANHPLLTGQRVLDALFPCVQGGTTAIPGAFGCGKTVISQSLSKYSNSDVIIYVGCGERGNEMSEVLRDFPELTMEVDGKVESIMKRTALVANTSNMPVAAREASIYTGITLSEYFRDMGYHVSMMADSTSRWAEALREISGRLAEMPADSGYPAYLGARLASFYERAGRVKCLGNPEREGSVSIVGAVSPPGGDFSDPVTSATLGIVQVFWGLDKKLAQRKHFPSVNWLISYSKYMRALDEYYDKHFTEFVPLRTKAKEILQEEEDLAEIVQLVGKASLAETDKITLEVAKLIKDDFLQQNGYTPYDKFCPFYKTVGMLSNMIAFYDMARRAVETTAQSDNKITWSIIREHMGDILYKLSSMKFKDPLKDGEAKIKSDYAQLLEDMQNAFRSLED</sequence>
<feature type="chain" id="PRO_0000232904" description="V-type proton ATPase catalytic subunit A">
    <location>
        <begin position="1"/>
        <end position="617"/>
    </location>
</feature>
<feature type="binding site" evidence="4">
    <location>
        <begin position="250"/>
        <end position="257"/>
    </location>
    <ligand>
        <name>ATP</name>
        <dbReference type="ChEBI" id="CHEBI:30616"/>
    </ligand>
</feature>
<feature type="modified residue" description="Phosphothreonine" evidence="2">
    <location>
        <position position="136"/>
    </location>
</feature>
<feature type="modified residue" description="Phosphoserine; by AMPK" evidence="3">
    <location>
        <position position="384"/>
    </location>
</feature>
<organism>
    <name type="scientific">Pongo abelii</name>
    <name type="common">Sumatran orangutan</name>
    <name type="synonym">Pongo pygmaeus abelii</name>
    <dbReference type="NCBI Taxonomy" id="9601"/>
    <lineage>
        <taxon>Eukaryota</taxon>
        <taxon>Metazoa</taxon>
        <taxon>Chordata</taxon>
        <taxon>Craniata</taxon>
        <taxon>Vertebrata</taxon>
        <taxon>Euteleostomi</taxon>
        <taxon>Mammalia</taxon>
        <taxon>Eutheria</taxon>
        <taxon>Euarchontoglires</taxon>
        <taxon>Primates</taxon>
        <taxon>Haplorrhini</taxon>
        <taxon>Catarrhini</taxon>
        <taxon>Hominidae</taxon>
        <taxon>Pongo</taxon>
    </lineage>
</organism>
<protein>
    <recommendedName>
        <fullName>V-type proton ATPase catalytic subunit A</fullName>
        <shortName>V-ATPase subunit A</shortName>
        <ecNumber evidence="3">7.1.2.2</ecNumber>
    </recommendedName>
    <alternativeName>
        <fullName>V-ATPase 69 kDa subunit</fullName>
    </alternativeName>
    <alternativeName>
        <fullName>Vacuolar proton pump subunit alpha</fullName>
    </alternativeName>
</protein>
<gene>
    <name type="primary">ATP6V1A</name>
</gene>